<organism>
    <name type="scientific">Danio rerio</name>
    <name type="common">Zebrafish</name>
    <name type="synonym">Brachydanio rerio</name>
    <dbReference type="NCBI Taxonomy" id="7955"/>
    <lineage>
        <taxon>Eukaryota</taxon>
        <taxon>Metazoa</taxon>
        <taxon>Chordata</taxon>
        <taxon>Craniata</taxon>
        <taxon>Vertebrata</taxon>
        <taxon>Euteleostomi</taxon>
        <taxon>Actinopterygii</taxon>
        <taxon>Neopterygii</taxon>
        <taxon>Teleostei</taxon>
        <taxon>Ostariophysi</taxon>
        <taxon>Cypriniformes</taxon>
        <taxon>Danionidae</taxon>
        <taxon>Danioninae</taxon>
        <taxon>Danio</taxon>
    </lineage>
</organism>
<evidence type="ECO:0000250" key="1">
    <source>
        <dbReference type="UniProtKB" id="Q15475"/>
    </source>
</evidence>
<evidence type="ECO:0000255" key="2">
    <source>
        <dbReference type="PROSITE-ProRule" id="PRU00108"/>
    </source>
</evidence>
<evidence type="ECO:0000256" key="3">
    <source>
        <dbReference type="SAM" id="MobiDB-lite"/>
    </source>
</evidence>
<evidence type="ECO:0000269" key="4">
    <source>
    </source>
</evidence>
<evidence type="ECO:0000269" key="5">
    <source>
    </source>
</evidence>
<evidence type="ECO:0000269" key="6">
    <source>
    </source>
</evidence>
<evidence type="ECO:0000269" key="7">
    <source>
    </source>
</evidence>
<evidence type="ECO:0000269" key="8">
    <source>
    </source>
</evidence>
<evidence type="ECO:0000269" key="9">
    <source>
    </source>
</evidence>
<evidence type="ECO:0000305" key="10"/>
<evidence type="ECO:0000305" key="11">
    <source>
    </source>
</evidence>
<evidence type="ECO:0000305" key="12">
    <source>
    </source>
</evidence>
<evidence type="ECO:0000305" key="13">
    <source>
    </source>
</evidence>
<evidence type="ECO:0000305" key="14">
    <source>
    </source>
</evidence>
<evidence type="ECO:0000305" key="15">
    <source>
    </source>
</evidence>
<comment type="function">
    <text evidence="5 6 7 8 9">Transcription factor that is involved in the regulation of cell proliferation, apoptosis and embryonic development. Depending on context, functions as a transcriptional repressor or activator. Transcriptional activation is enhanced by eya1 (in vitro). Plays an important role in the development of the inner ear, where it promotes hair cell proliferation and inhibits proliferation of neural progenitor cells. Required for normal myogenesis. Plays a role in the development of fast muscle fibers throughout the body, as well as the development of craniofacial muscles. Required for normal expression of myod1 and myog during myogenesis.</text>
</comment>
<comment type="subunit">
    <text evidence="15">Interacts with eya1.</text>
</comment>
<comment type="subcellular location">
    <subcellularLocation>
        <location evidence="1">Nucleus</location>
    </subcellularLocation>
    <subcellularLocation>
        <location evidence="1">Cytoplasm</location>
    </subcellularLocation>
</comment>
<comment type="developmental stage">
    <text evidence="4 5 6 7">First detected at mid-gastrulation. After the onset of segmentation, detected in cranial placode. At later stages of development, detected in the olfactory, otic, and lateral line placodes, in the developing inner ear and in neuromasts. After 48 hpf, no longer detected in the inner ear, but continues to be expressed in lateral line neuromasts. In addition, detected in the pituitary, branchial arches, somites, pectoral fin, ventral abdomen muscle, and the cranial muscles of the eye and lower jaw. Detected in developing fast muscle.</text>
</comment>
<comment type="disruption phenotype">
    <text evidence="5 6 7 9">Morpholino knockdown of the protein increases both cell proliferation and apoptosis in the otocyst. Increases proliferation of neuronal cells and decreases the number of cells destined to form hair cells. Disrupts myogenesis by interfering with the proliferation of dermomyotomal cells expressing pax7 and loss of myog expression.</text>
</comment>
<comment type="similarity">
    <text evidence="10">Belongs to the SIX/Sine oculis homeobox family.</text>
</comment>
<comment type="caution">
    <text evidence="11 12 13 14">Zebrafish has two genes coding for six1 orthologs. This gene is called six1b by ZFIN and in PubMed:23444384, but has also been described as six1 (PubMed:17035528) and as six1a (PubMed:15254912, PubMed:18789916, PubMed:19409884).</text>
</comment>
<protein>
    <recommendedName>
        <fullName>Homeobox protein six1b</fullName>
    </recommendedName>
    <alternativeName>
        <fullName>Homeobox protein six1a</fullName>
    </alternativeName>
    <alternativeName>
        <fullName>Sine oculis homeobox homolog 1a</fullName>
    </alternativeName>
    <alternativeName>
        <fullName>Sine oculis homeobox homolog 1b</fullName>
    </alternativeName>
</protein>
<reference key="1">
    <citation type="journal article" date="2004" name="Dev. Dyn.">
        <title>Expression of zebrafish six1 during sensory organ development and myogenesis.</title>
        <authorList>
            <person name="Bessarab D.A."/>
            <person name="Chong S.W."/>
            <person name="Korzh V."/>
        </authorList>
    </citation>
    <scope>NUCLEOTIDE SEQUENCE [MRNA]</scope>
    <scope>DEVELOPMENTAL STAGE</scope>
</reference>
<reference key="2">
    <citation type="journal article" date="2006" name="J. Neurosci.">
        <title>The transcription factor six1 inhibits neuronal and promotes hair cell fate in the developing zebrafish (Danio rerio) inner ear.</title>
        <authorList>
            <person name="Bricaud O."/>
            <person name="Collazo A."/>
        </authorList>
    </citation>
    <scope>NUCLEOTIDE SEQUENCE [MRNA]</scope>
    <scope>FUNCTION</scope>
    <scope>DISRUPTION PHENOTYPE</scope>
    <scope>DEVELOPMENTAL STAGE</scope>
</reference>
<reference key="3">
    <citation type="journal article" date="2013" name="Nature">
        <title>The zebrafish reference genome sequence and its relationship to the human genome.</title>
        <authorList>
            <person name="Howe K."/>
            <person name="Clark M.D."/>
            <person name="Torroja C.F."/>
            <person name="Torrance J."/>
            <person name="Berthelot C."/>
            <person name="Muffato M."/>
            <person name="Collins J.E."/>
            <person name="Humphray S."/>
            <person name="McLaren K."/>
            <person name="Matthews L."/>
            <person name="McLaren S."/>
            <person name="Sealy I."/>
            <person name="Caccamo M."/>
            <person name="Churcher C."/>
            <person name="Scott C."/>
            <person name="Barrett J.C."/>
            <person name="Koch R."/>
            <person name="Rauch G.J."/>
            <person name="White S."/>
            <person name="Chow W."/>
            <person name="Kilian B."/>
            <person name="Quintais L.T."/>
            <person name="Guerra-Assuncao J.A."/>
            <person name="Zhou Y."/>
            <person name="Gu Y."/>
            <person name="Yen J."/>
            <person name="Vogel J.H."/>
            <person name="Eyre T."/>
            <person name="Redmond S."/>
            <person name="Banerjee R."/>
            <person name="Chi J."/>
            <person name="Fu B."/>
            <person name="Langley E."/>
            <person name="Maguire S.F."/>
            <person name="Laird G.K."/>
            <person name="Lloyd D."/>
            <person name="Kenyon E."/>
            <person name="Donaldson S."/>
            <person name="Sehra H."/>
            <person name="Almeida-King J."/>
            <person name="Loveland J."/>
            <person name="Trevanion S."/>
            <person name="Jones M."/>
            <person name="Quail M."/>
            <person name="Willey D."/>
            <person name="Hunt A."/>
            <person name="Burton J."/>
            <person name="Sims S."/>
            <person name="McLay K."/>
            <person name="Plumb B."/>
            <person name="Davis J."/>
            <person name="Clee C."/>
            <person name="Oliver K."/>
            <person name="Clark R."/>
            <person name="Riddle C."/>
            <person name="Elliot D."/>
            <person name="Threadgold G."/>
            <person name="Harden G."/>
            <person name="Ware D."/>
            <person name="Begum S."/>
            <person name="Mortimore B."/>
            <person name="Kerry G."/>
            <person name="Heath P."/>
            <person name="Phillimore B."/>
            <person name="Tracey A."/>
            <person name="Corby N."/>
            <person name="Dunn M."/>
            <person name="Johnson C."/>
            <person name="Wood J."/>
            <person name="Clark S."/>
            <person name="Pelan S."/>
            <person name="Griffiths G."/>
            <person name="Smith M."/>
            <person name="Glithero R."/>
            <person name="Howden P."/>
            <person name="Barker N."/>
            <person name="Lloyd C."/>
            <person name="Stevens C."/>
            <person name="Harley J."/>
            <person name="Holt K."/>
            <person name="Panagiotidis G."/>
            <person name="Lovell J."/>
            <person name="Beasley H."/>
            <person name="Henderson C."/>
            <person name="Gordon D."/>
            <person name="Auger K."/>
            <person name="Wright D."/>
            <person name="Collins J."/>
            <person name="Raisen C."/>
            <person name="Dyer L."/>
            <person name="Leung K."/>
            <person name="Robertson L."/>
            <person name="Ambridge K."/>
            <person name="Leongamornlert D."/>
            <person name="McGuire S."/>
            <person name="Gilderthorp R."/>
            <person name="Griffiths C."/>
            <person name="Manthravadi D."/>
            <person name="Nichol S."/>
            <person name="Barker G."/>
            <person name="Whitehead S."/>
            <person name="Kay M."/>
            <person name="Brown J."/>
            <person name="Murnane C."/>
            <person name="Gray E."/>
            <person name="Humphries M."/>
            <person name="Sycamore N."/>
            <person name="Barker D."/>
            <person name="Saunders D."/>
            <person name="Wallis J."/>
            <person name="Babbage A."/>
            <person name="Hammond S."/>
            <person name="Mashreghi-Mohammadi M."/>
            <person name="Barr L."/>
            <person name="Martin S."/>
            <person name="Wray P."/>
            <person name="Ellington A."/>
            <person name="Matthews N."/>
            <person name="Ellwood M."/>
            <person name="Woodmansey R."/>
            <person name="Clark G."/>
            <person name="Cooper J."/>
            <person name="Tromans A."/>
            <person name="Grafham D."/>
            <person name="Skuce C."/>
            <person name="Pandian R."/>
            <person name="Andrews R."/>
            <person name="Harrison E."/>
            <person name="Kimberley A."/>
            <person name="Garnett J."/>
            <person name="Fosker N."/>
            <person name="Hall R."/>
            <person name="Garner P."/>
            <person name="Kelly D."/>
            <person name="Bird C."/>
            <person name="Palmer S."/>
            <person name="Gehring I."/>
            <person name="Berger A."/>
            <person name="Dooley C.M."/>
            <person name="Ersan-Urun Z."/>
            <person name="Eser C."/>
            <person name="Geiger H."/>
            <person name="Geisler M."/>
            <person name="Karotki L."/>
            <person name="Kirn A."/>
            <person name="Konantz J."/>
            <person name="Konantz M."/>
            <person name="Oberlander M."/>
            <person name="Rudolph-Geiger S."/>
            <person name="Teucke M."/>
            <person name="Lanz C."/>
            <person name="Raddatz G."/>
            <person name="Osoegawa K."/>
            <person name="Zhu B."/>
            <person name="Rapp A."/>
            <person name="Widaa S."/>
            <person name="Langford C."/>
            <person name="Yang F."/>
            <person name="Schuster S.C."/>
            <person name="Carter N.P."/>
            <person name="Harrow J."/>
            <person name="Ning Z."/>
            <person name="Herrero J."/>
            <person name="Searle S.M."/>
            <person name="Enright A."/>
            <person name="Geisler R."/>
            <person name="Plasterk R.H."/>
            <person name="Lee C."/>
            <person name="Westerfield M."/>
            <person name="de Jong P.J."/>
            <person name="Zon L.I."/>
            <person name="Postlethwait J.H."/>
            <person name="Nusslein-Volhard C."/>
            <person name="Hubbard T.J."/>
            <person name="Roest Crollius H."/>
            <person name="Rogers J."/>
            <person name="Stemple D.L."/>
        </authorList>
    </citation>
    <scope>NUCLEOTIDE SEQUENCE [LARGE SCALE GENOMIC DNA]</scope>
    <source>
        <strain>Tuebingen</strain>
    </source>
</reference>
<reference key="4">
    <citation type="submission" date="2004-02" db="EMBL/GenBank/DDBJ databases">
        <authorList>
            <consortium name="NIH - Zebrafish Gene Collection (ZGC) project"/>
        </authorList>
    </citation>
    <scope>NUCLEOTIDE SEQUENCE [LARGE SCALE MRNA]</scope>
    <source>
        <tissue>Embryo</tissue>
    </source>
</reference>
<reference key="5">
    <citation type="journal article" date="2008" name="Dev. Biol.">
        <title>Six1a is required for the onset of fast muscle differentiation in zebrafish.</title>
        <authorList>
            <person name="Bessarab D.A."/>
            <person name="Chong S.W."/>
            <person name="Srinivas B.P."/>
            <person name="Korzh V."/>
        </authorList>
    </citation>
    <scope>FUNCTION</scope>
    <scope>DEVELOPMENTAL STAGE</scope>
    <scope>DISRUPTION PHENOTYPE</scope>
</reference>
<reference key="6">
    <citation type="journal article" date="2009" name="Dev. Biol.">
        <title>The transcription factor Six1a plays an essential role in the craniofacial myogenesis of zebrafish.</title>
        <authorList>
            <person name="Lin C.Y."/>
            <person name="Chen W.T."/>
            <person name="Lee H.C."/>
            <person name="Yang P.H."/>
            <person name="Yang H.J."/>
            <person name="Tsai H.J."/>
        </authorList>
    </citation>
    <scope>FUNCTION</scope>
    <scope>DEVELOPMENTAL STAGE</scope>
    <scope>DISRUPTION PHENOTYPE</scope>
</reference>
<reference key="7">
    <citation type="journal article" date="2011" name="Dev. Biol.">
        <title>Balancing cell numbers during organogenesis: Six1a differentially affects neurons and sensory hair cells in the inner ear.</title>
        <authorList>
            <person name="Bricaud O."/>
            <person name="Collazo A."/>
        </authorList>
    </citation>
    <scope>FUNCTION</scope>
    <scope>DNA-BINDING</scope>
    <scope>INTERACTION WITH EYA1</scope>
    <scope>MUTAGENESIS OF ARG-110; TYR-129 AND GLU-133</scope>
</reference>
<reference key="8">
    <citation type="journal article" date="2013" name="J. Cell Sci.">
        <title>Six1 regulates proliferation of Pax7+ muscle progenitors in zebrafish.</title>
        <authorList>
            <person name="Nord H."/>
            <person name="Skalman L.N."/>
            <person name="von Hofsten J."/>
        </authorList>
    </citation>
    <scope>FUNCTION</scope>
    <scope>DISRUPTION PHENOTYPE</scope>
</reference>
<sequence length="284" mass="31975">MSMLPSFGFTQEQVACVCEVLQQGGNLERLGRFLWSLPACDHLHKNESVLKAKAVVAFHRGNFRELYKILESHQFSPHNHPKLQQLWLKAHYIEAEKLRGRPLGAVGKYRVRRKFPLPRTIWDGEETSYCFKEKSRGVLREWYTHNPYPSPREKRELAEATGLTTTQVSNWFKNRRQRDRAAEAKERENSENNNTGANKQNQLSPLDGGKSLMSSSEDEFSPPQSPDQNSVLLLQGNMSHPGASAYSMTGLGAAQSVHGMQGHPHQLQDSLLGPLTSSLVDLGS</sequence>
<keyword id="KW-0010">Activator</keyword>
<keyword id="KW-0053">Apoptosis</keyword>
<keyword id="KW-0963">Cytoplasm</keyword>
<keyword id="KW-0217">Developmental protein</keyword>
<keyword id="KW-0238">DNA-binding</keyword>
<keyword id="KW-0371">Homeobox</keyword>
<keyword id="KW-0539">Nucleus</keyword>
<keyword id="KW-1185">Reference proteome</keyword>
<keyword id="KW-0678">Repressor</keyword>
<keyword id="KW-0804">Transcription</keyword>
<keyword id="KW-0805">Transcription regulation</keyword>
<proteinExistence type="evidence at protein level"/>
<feature type="chain" id="PRO_0000422774" description="Homeobox protein six1b">
    <location>
        <begin position="1"/>
        <end position="284"/>
    </location>
</feature>
<feature type="DNA-binding region" description="Homeobox" evidence="2">
    <location>
        <begin position="124"/>
        <end position="183"/>
    </location>
</feature>
<feature type="region of interest" description="Disordered" evidence="3">
    <location>
        <begin position="167"/>
        <end position="238"/>
    </location>
</feature>
<feature type="compositionally biased region" description="Basic and acidic residues" evidence="3">
    <location>
        <begin position="179"/>
        <end position="190"/>
    </location>
</feature>
<feature type="compositionally biased region" description="Polar residues" evidence="3">
    <location>
        <begin position="191"/>
        <end position="204"/>
    </location>
</feature>
<feature type="compositionally biased region" description="Polar residues" evidence="3">
    <location>
        <begin position="226"/>
        <end position="238"/>
    </location>
</feature>
<feature type="mutagenesis site" description="Abolishes regulation of hair cell proliferation. No effect on regulation of neuron proliferation." evidence="8">
    <original>R</original>
    <variation>W</variation>
    <location>
        <position position="110"/>
    </location>
</feature>
<feature type="mutagenesis site" description="Impairs transcription factor activity." evidence="8">
    <original>Y</original>
    <variation>C</variation>
    <location>
        <position position="129"/>
    </location>
</feature>
<feature type="mutagenesis site" description="Impairs transcription factor activity." evidence="8">
    <location>
        <position position="133"/>
    </location>
</feature>
<feature type="sequence conflict" description="In Ref. 2; AAO83592." evidence="10" ref="2">
    <original>G</original>
    <variation>V</variation>
    <location>
        <position position="107"/>
    </location>
</feature>
<accession>Q6NZ04</accession>
<accession>Q05FF5</accession>
<gene>
    <name type="primary">six1b</name>
    <name type="synonym">six1</name>
    <name type="synonym">six1a</name>
</gene>
<name>SIX1B_DANRE</name>
<dbReference type="EMBL" id="AY466110">
    <property type="protein sequence ID" value="AAS46283.1"/>
    <property type="molecule type" value="mRNA"/>
</dbReference>
<dbReference type="EMBL" id="AY254196">
    <property type="protein sequence ID" value="AAO83592.1"/>
    <property type="molecule type" value="mRNA"/>
</dbReference>
<dbReference type="EMBL" id="BX649231">
    <property type="status" value="NOT_ANNOTATED_CDS"/>
    <property type="molecule type" value="Genomic_DNA"/>
</dbReference>
<dbReference type="EMBL" id="BC066396">
    <property type="protein sequence ID" value="AAH66396.1"/>
    <property type="molecule type" value="mRNA"/>
</dbReference>
<dbReference type="RefSeq" id="NP_996978.1">
    <property type="nucleotide sequence ID" value="NM_207095.1"/>
</dbReference>
<dbReference type="SMR" id="Q6NZ04"/>
<dbReference type="FunCoup" id="Q6NZ04">
    <property type="interactions" value="505"/>
</dbReference>
<dbReference type="STRING" id="7955.ENSDARP00000028379"/>
<dbReference type="PaxDb" id="7955-ENSDARP00000028379"/>
<dbReference type="Ensembl" id="ENSDART00000036124">
    <property type="protein sequence ID" value="ENSDARP00000028379"/>
    <property type="gene ID" value="ENSDARG00000026473"/>
</dbReference>
<dbReference type="GeneID" id="404627"/>
<dbReference type="KEGG" id="dre:404627"/>
<dbReference type="AGR" id="ZFIN:ZDB-GENE-040426-2308"/>
<dbReference type="CTD" id="404627"/>
<dbReference type="ZFIN" id="ZDB-GENE-040426-2308">
    <property type="gene designation" value="six1b"/>
</dbReference>
<dbReference type="eggNOG" id="KOG0775">
    <property type="taxonomic scope" value="Eukaryota"/>
</dbReference>
<dbReference type="HOGENOM" id="CLU_046914_2_0_1"/>
<dbReference type="InParanoid" id="Q6NZ04"/>
<dbReference type="OMA" id="TSHMNEN"/>
<dbReference type="OrthoDB" id="3501850at2759"/>
<dbReference type="PhylomeDB" id="Q6NZ04"/>
<dbReference type="TreeFam" id="TF315545"/>
<dbReference type="PRO" id="PR:Q6NZ04"/>
<dbReference type="Proteomes" id="UP000000437">
    <property type="component" value="Chromosome 20"/>
</dbReference>
<dbReference type="Bgee" id="ENSDARG00000026473">
    <property type="expression patterns" value="Expressed in muscle tissue and 52 other cell types or tissues"/>
</dbReference>
<dbReference type="GO" id="GO:0005737">
    <property type="term" value="C:cytoplasm"/>
    <property type="evidence" value="ECO:0007669"/>
    <property type="project" value="UniProtKB-SubCell"/>
</dbReference>
<dbReference type="GO" id="GO:0005634">
    <property type="term" value="C:nucleus"/>
    <property type="evidence" value="ECO:0000318"/>
    <property type="project" value="GO_Central"/>
</dbReference>
<dbReference type="GO" id="GO:0005667">
    <property type="term" value="C:transcription regulator complex"/>
    <property type="evidence" value="ECO:0000318"/>
    <property type="project" value="GO_Central"/>
</dbReference>
<dbReference type="GO" id="GO:0000981">
    <property type="term" value="F:DNA-binding transcription factor activity, RNA polymerase II-specific"/>
    <property type="evidence" value="ECO:0000318"/>
    <property type="project" value="GO_Central"/>
</dbReference>
<dbReference type="GO" id="GO:0000978">
    <property type="term" value="F:RNA polymerase II cis-regulatory region sequence-specific DNA binding"/>
    <property type="evidence" value="ECO:0000318"/>
    <property type="project" value="GO_Central"/>
</dbReference>
<dbReference type="GO" id="GO:0021984">
    <property type="term" value="P:adenohypophysis development"/>
    <property type="evidence" value="ECO:0000316"/>
    <property type="project" value="ZFIN"/>
</dbReference>
<dbReference type="GO" id="GO:0006915">
    <property type="term" value="P:apoptotic process"/>
    <property type="evidence" value="ECO:0007669"/>
    <property type="project" value="UniProtKB-KW"/>
</dbReference>
<dbReference type="GO" id="GO:0043282">
    <property type="term" value="P:chordate pharyngeal muscle development"/>
    <property type="evidence" value="ECO:0000315"/>
    <property type="project" value="ZFIN"/>
</dbReference>
<dbReference type="GO" id="GO:0002074">
    <property type="term" value="P:extraocular skeletal muscle development"/>
    <property type="evidence" value="ECO:0000315"/>
    <property type="project" value="ZFIN"/>
</dbReference>
<dbReference type="GO" id="GO:0048839">
    <property type="term" value="P:inner ear development"/>
    <property type="evidence" value="ECO:0000315"/>
    <property type="project" value="ZFIN"/>
</dbReference>
<dbReference type="GO" id="GO:0048935">
    <property type="term" value="P:peripheral nervous system neuron development"/>
    <property type="evidence" value="ECO:0000315"/>
    <property type="project" value="ZFIN"/>
</dbReference>
<dbReference type="GO" id="GO:0014857">
    <property type="term" value="P:regulation of skeletal muscle cell proliferation"/>
    <property type="evidence" value="ECO:0000315"/>
    <property type="project" value="ZFIN"/>
</dbReference>
<dbReference type="GO" id="GO:0006357">
    <property type="term" value="P:regulation of transcription by RNA polymerase II"/>
    <property type="evidence" value="ECO:0000318"/>
    <property type="project" value="GO_Central"/>
</dbReference>
<dbReference type="GO" id="GO:0048741">
    <property type="term" value="P:skeletal muscle fiber development"/>
    <property type="evidence" value="ECO:0000316"/>
    <property type="project" value="ZFIN"/>
</dbReference>
<dbReference type="GO" id="GO:0051146">
    <property type="term" value="P:striated muscle cell differentiation"/>
    <property type="evidence" value="ECO:0000315"/>
    <property type="project" value="ZFIN"/>
</dbReference>
<dbReference type="CDD" id="cd00086">
    <property type="entry name" value="homeodomain"/>
    <property type="match status" value="1"/>
</dbReference>
<dbReference type="FunFam" id="1.10.10.60:FF:000063">
    <property type="entry name" value="SIX homeobox 2"/>
    <property type="match status" value="1"/>
</dbReference>
<dbReference type="Gene3D" id="1.10.10.60">
    <property type="entry name" value="Homeodomain-like"/>
    <property type="match status" value="1"/>
</dbReference>
<dbReference type="InterPro" id="IPR001356">
    <property type="entry name" value="HD"/>
</dbReference>
<dbReference type="InterPro" id="IPR017970">
    <property type="entry name" value="Homeobox_CS"/>
</dbReference>
<dbReference type="InterPro" id="IPR009057">
    <property type="entry name" value="Homeodomain-like_sf"/>
</dbReference>
<dbReference type="InterPro" id="IPR008422">
    <property type="entry name" value="KN_HD"/>
</dbReference>
<dbReference type="InterPro" id="IPR031701">
    <property type="entry name" value="SIX1_SD"/>
</dbReference>
<dbReference type="PANTHER" id="PTHR10390">
    <property type="entry name" value="HOMEOBOX PROTEIN SIX"/>
    <property type="match status" value="1"/>
</dbReference>
<dbReference type="PANTHER" id="PTHR10390:SF13">
    <property type="entry name" value="HOMEOBOX PROTEIN SIX1"/>
    <property type="match status" value="1"/>
</dbReference>
<dbReference type="Pfam" id="PF05920">
    <property type="entry name" value="Homeobox_KN"/>
    <property type="match status" value="1"/>
</dbReference>
<dbReference type="Pfam" id="PF16878">
    <property type="entry name" value="SIX1_SD"/>
    <property type="match status" value="1"/>
</dbReference>
<dbReference type="SMART" id="SM00389">
    <property type="entry name" value="HOX"/>
    <property type="match status" value="1"/>
</dbReference>
<dbReference type="SUPFAM" id="SSF46689">
    <property type="entry name" value="Homeodomain-like"/>
    <property type="match status" value="1"/>
</dbReference>
<dbReference type="PROSITE" id="PS00027">
    <property type="entry name" value="HOMEOBOX_1"/>
    <property type="match status" value="1"/>
</dbReference>
<dbReference type="PROSITE" id="PS50071">
    <property type="entry name" value="HOMEOBOX_2"/>
    <property type="match status" value="1"/>
</dbReference>